<feature type="chain" id="PRO_1000007195" description="Large ribosomal subunit protein bL28">
    <location>
        <begin position="1"/>
        <end position="77"/>
    </location>
</feature>
<feature type="region of interest" description="Disordered" evidence="2">
    <location>
        <begin position="1"/>
        <end position="25"/>
    </location>
</feature>
<gene>
    <name evidence="1" type="primary">rpmB</name>
    <name type="ordered locus">Bcep1808_2580</name>
</gene>
<keyword id="KW-0687">Ribonucleoprotein</keyword>
<keyword id="KW-0689">Ribosomal protein</keyword>
<sequence>MARVCQVTGKAPMSGNNVSHANNKTKRRFLPNLQNRRFWVESENRWVRLRVSNAGLRLIDKNGIDSVLADLRARGEA</sequence>
<accession>A4JH22</accession>
<evidence type="ECO:0000255" key="1">
    <source>
        <dbReference type="HAMAP-Rule" id="MF_00373"/>
    </source>
</evidence>
<evidence type="ECO:0000256" key="2">
    <source>
        <dbReference type="SAM" id="MobiDB-lite"/>
    </source>
</evidence>
<evidence type="ECO:0000305" key="3"/>
<protein>
    <recommendedName>
        <fullName evidence="1">Large ribosomal subunit protein bL28</fullName>
    </recommendedName>
    <alternativeName>
        <fullName evidence="3">50S ribosomal protein L28</fullName>
    </alternativeName>
</protein>
<reference key="1">
    <citation type="submission" date="2007-03" db="EMBL/GenBank/DDBJ databases">
        <title>Complete sequence of chromosome 1 of Burkholderia vietnamiensis G4.</title>
        <authorList>
            <consortium name="US DOE Joint Genome Institute"/>
            <person name="Copeland A."/>
            <person name="Lucas S."/>
            <person name="Lapidus A."/>
            <person name="Barry K."/>
            <person name="Detter J.C."/>
            <person name="Glavina del Rio T."/>
            <person name="Hammon N."/>
            <person name="Israni S."/>
            <person name="Dalin E."/>
            <person name="Tice H."/>
            <person name="Pitluck S."/>
            <person name="Chain P."/>
            <person name="Malfatti S."/>
            <person name="Shin M."/>
            <person name="Vergez L."/>
            <person name="Schmutz J."/>
            <person name="Larimer F."/>
            <person name="Land M."/>
            <person name="Hauser L."/>
            <person name="Kyrpides N."/>
            <person name="Tiedje J."/>
            <person name="Richardson P."/>
        </authorList>
    </citation>
    <scope>NUCLEOTIDE SEQUENCE [LARGE SCALE GENOMIC DNA]</scope>
    <source>
        <strain>G4 / LMG 22486</strain>
    </source>
</reference>
<dbReference type="EMBL" id="CP000614">
    <property type="protein sequence ID" value="ABO55575.1"/>
    <property type="molecule type" value="Genomic_DNA"/>
</dbReference>
<dbReference type="SMR" id="A4JH22"/>
<dbReference type="KEGG" id="bvi:Bcep1808_2580"/>
<dbReference type="eggNOG" id="COG0227">
    <property type="taxonomic scope" value="Bacteria"/>
</dbReference>
<dbReference type="HOGENOM" id="CLU_064548_3_1_4"/>
<dbReference type="Proteomes" id="UP000002287">
    <property type="component" value="Chromosome 1"/>
</dbReference>
<dbReference type="GO" id="GO:0022625">
    <property type="term" value="C:cytosolic large ribosomal subunit"/>
    <property type="evidence" value="ECO:0007669"/>
    <property type="project" value="TreeGrafter"/>
</dbReference>
<dbReference type="GO" id="GO:0003735">
    <property type="term" value="F:structural constituent of ribosome"/>
    <property type="evidence" value="ECO:0007669"/>
    <property type="project" value="InterPro"/>
</dbReference>
<dbReference type="GO" id="GO:0006412">
    <property type="term" value="P:translation"/>
    <property type="evidence" value="ECO:0007669"/>
    <property type="project" value="UniProtKB-UniRule"/>
</dbReference>
<dbReference type="FunFam" id="2.30.170.40:FF:000001">
    <property type="entry name" value="50S ribosomal protein L28"/>
    <property type="match status" value="1"/>
</dbReference>
<dbReference type="Gene3D" id="2.30.170.40">
    <property type="entry name" value="Ribosomal protein L28/L24"/>
    <property type="match status" value="1"/>
</dbReference>
<dbReference type="HAMAP" id="MF_00373">
    <property type="entry name" value="Ribosomal_bL28"/>
    <property type="match status" value="1"/>
</dbReference>
<dbReference type="InterPro" id="IPR026569">
    <property type="entry name" value="Ribosomal_bL28"/>
</dbReference>
<dbReference type="InterPro" id="IPR034704">
    <property type="entry name" value="Ribosomal_bL28/bL31-like_sf"/>
</dbReference>
<dbReference type="InterPro" id="IPR001383">
    <property type="entry name" value="Ribosomal_bL28_bact-type"/>
</dbReference>
<dbReference type="InterPro" id="IPR037147">
    <property type="entry name" value="Ribosomal_bL28_sf"/>
</dbReference>
<dbReference type="NCBIfam" id="TIGR00009">
    <property type="entry name" value="L28"/>
    <property type="match status" value="1"/>
</dbReference>
<dbReference type="PANTHER" id="PTHR13528">
    <property type="entry name" value="39S RIBOSOMAL PROTEIN L28, MITOCHONDRIAL"/>
    <property type="match status" value="1"/>
</dbReference>
<dbReference type="PANTHER" id="PTHR13528:SF2">
    <property type="entry name" value="LARGE RIBOSOMAL SUBUNIT PROTEIN BL28M"/>
    <property type="match status" value="1"/>
</dbReference>
<dbReference type="Pfam" id="PF00830">
    <property type="entry name" value="Ribosomal_L28"/>
    <property type="match status" value="1"/>
</dbReference>
<dbReference type="SUPFAM" id="SSF143800">
    <property type="entry name" value="L28p-like"/>
    <property type="match status" value="1"/>
</dbReference>
<name>RL28_BURVG</name>
<comment type="similarity">
    <text evidence="1">Belongs to the bacterial ribosomal protein bL28 family.</text>
</comment>
<proteinExistence type="inferred from homology"/>
<organism>
    <name type="scientific">Burkholderia vietnamiensis (strain G4 / LMG 22486)</name>
    <name type="common">Burkholderia cepacia (strain R1808)</name>
    <dbReference type="NCBI Taxonomy" id="269482"/>
    <lineage>
        <taxon>Bacteria</taxon>
        <taxon>Pseudomonadati</taxon>
        <taxon>Pseudomonadota</taxon>
        <taxon>Betaproteobacteria</taxon>
        <taxon>Burkholderiales</taxon>
        <taxon>Burkholderiaceae</taxon>
        <taxon>Burkholderia</taxon>
        <taxon>Burkholderia cepacia complex</taxon>
    </lineage>
</organism>